<name>FDHE_PECAS</name>
<comment type="function">
    <text evidence="1">Necessary for formate dehydrogenase activity.</text>
</comment>
<comment type="subcellular location">
    <subcellularLocation>
        <location evidence="1">Cytoplasm</location>
    </subcellularLocation>
</comment>
<comment type="similarity">
    <text evidence="1">Belongs to the FdhE family.</text>
</comment>
<keyword id="KW-0963">Cytoplasm</keyword>
<keyword id="KW-1185">Reference proteome</keyword>
<reference key="1">
    <citation type="journal article" date="2004" name="Proc. Natl. Acad. Sci. U.S.A.">
        <title>Genome sequence of the enterobacterial phytopathogen Erwinia carotovora subsp. atroseptica and characterization of virulence factors.</title>
        <authorList>
            <person name="Bell K.S."/>
            <person name="Sebaihia M."/>
            <person name="Pritchard L."/>
            <person name="Holden M.T.G."/>
            <person name="Hyman L.J."/>
            <person name="Holeva M.C."/>
            <person name="Thomson N.R."/>
            <person name="Bentley S.D."/>
            <person name="Churcher L.J.C."/>
            <person name="Mungall K."/>
            <person name="Atkin R."/>
            <person name="Bason N."/>
            <person name="Brooks K."/>
            <person name="Chillingworth T."/>
            <person name="Clark K."/>
            <person name="Doggett J."/>
            <person name="Fraser A."/>
            <person name="Hance Z."/>
            <person name="Hauser H."/>
            <person name="Jagels K."/>
            <person name="Moule S."/>
            <person name="Norbertczak H."/>
            <person name="Ormond D."/>
            <person name="Price C."/>
            <person name="Quail M.A."/>
            <person name="Sanders M."/>
            <person name="Walker D."/>
            <person name="Whitehead S."/>
            <person name="Salmond G.P.C."/>
            <person name="Birch P.R.J."/>
            <person name="Parkhill J."/>
            <person name="Toth I.K."/>
        </authorList>
    </citation>
    <scope>NUCLEOTIDE SEQUENCE [LARGE SCALE GENOMIC DNA]</scope>
    <source>
        <strain>SCRI 1043 / ATCC BAA-672</strain>
    </source>
</reference>
<accession>Q6D2U2</accession>
<sequence length="309" mass="34622">MSIRIVPQEQLEQNEQSTREGHIPPLLFANLKSLYSSRAERLRQLAEDHPLGDYLTFAAGVVEAQQKVLHDHPLHLDLSDVLKQSGERPPLDIAVFPRDAHWHTLLRALIEELKPDASGQVLSTLENLEKASEQELEEQATALLQHEFRAENNDKAPFIWAALSLFWAQMAGLLPGKARAVPGEHRQFCPVCGSIPVSGVVQLGTSSGLRYLHCNLCESEWHMVRVKCSNCEESSELNYWSLDSENSAIKAESCGHCGTYVKLLYQEKDHRVEAVADDLASLVLDVKMEEEGFSRSSINPFLFPESSIE</sequence>
<evidence type="ECO:0000255" key="1">
    <source>
        <dbReference type="HAMAP-Rule" id="MF_00611"/>
    </source>
</evidence>
<dbReference type="EMBL" id="BX950851">
    <property type="protein sequence ID" value="CAG75902.1"/>
    <property type="molecule type" value="Genomic_DNA"/>
</dbReference>
<dbReference type="RefSeq" id="WP_011094533.1">
    <property type="nucleotide sequence ID" value="NC_004547.2"/>
</dbReference>
<dbReference type="SMR" id="Q6D2U2"/>
<dbReference type="STRING" id="218491.ECA3002"/>
<dbReference type="GeneID" id="57209690"/>
<dbReference type="KEGG" id="eca:ECA3002"/>
<dbReference type="PATRIC" id="fig|218491.5.peg.3036"/>
<dbReference type="eggNOG" id="COG3058">
    <property type="taxonomic scope" value="Bacteria"/>
</dbReference>
<dbReference type="HOGENOM" id="CLU_055275_0_0_6"/>
<dbReference type="OrthoDB" id="9794151at2"/>
<dbReference type="Proteomes" id="UP000007966">
    <property type="component" value="Chromosome"/>
</dbReference>
<dbReference type="GO" id="GO:0005829">
    <property type="term" value="C:cytosol"/>
    <property type="evidence" value="ECO:0007669"/>
    <property type="project" value="TreeGrafter"/>
</dbReference>
<dbReference type="GO" id="GO:0008199">
    <property type="term" value="F:ferric iron binding"/>
    <property type="evidence" value="ECO:0007669"/>
    <property type="project" value="TreeGrafter"/>
</dbReference>
<dbReference type="GO" id="GO:0051604">
    <property type="term" value="P:protein maturation"/>
    <property type="evidence" value="ECO:0007669"/>
    <property type="project" value="TreeGrafter"/>
</dbReference>
<dbReference type="CDD" id="cd16341">
    <property type="entry name" value="FdhE"/>
    <property type="match status" value="1"/>
</dbReference>
<dbReference type="FunFam" id="3.90.1670.10:FF:000001">
    <property type="entry name" value="Protein FdhE"/>
    <property type="match status" value="1"/>
</dbReference>
<dbReference type="Gene3D" id="3.90.1670.10">
    <property type="entry name" value="FdhE-like domain"/>
    <property type="match status" value="1"/>
</dbReference>
<dbReference type="HAMAP" id="MF_00611">
    <property type="entry name" value="FdeH"/>
    <property type="match status" value="1"/>
</dbReference>
<dbReference type="InterPro" id="IPR024064">
    <property type="entry name" value="FdhE-like_sf"/>
</dbReference>
<dbReference type="InterPro" id="IPR056796">
    <property type="entry name" value="FdhE_C"/>
</dbReference>
<dbReference type="InterPro" id="IPR056797">
    <property type="entry name" value="FdhE_central"/>
</dbReference>
<dbReference type="InterPro" id="IPR056774">
    <property type="entry name" value="FdhE_N"/>
</dbReference>
<dbReference type="InterPro" id="IPR006452">
    <property type="entry name" value="Formate_DH_accessory"/>
</dbReference>
<dbReference type="NCBIfam" id="TIGR01562">
    <property type="entry name" value="FdhE"/>
    <property type="match status" value="1"/>
</dbReference>
<dbReference type="NCBIfam" id="NF002925">
    <property type="entry name" value="PRK03564.1"/>
    <property type="match status" value="1"/>
</dbReference>
<dbReference type="PANTHER" id="PTHR37689">
    <property type="entry name" value="PROTEIN FDHE"/>
    <property type="match status" value="1"/>
</dbReference>
<dbReference type="PANTHER" id="PTHR37689:SF1">
    <property type="entry name" value="PROTEIN FDHE"/>
    <property type="match status" value="1"/>
</dbReference>
<dbReference type="Pfam" id="PF24860">
    <property type="entry name" value="FdhE_C"/>
    <property type="match status" value="1"/>
</dbReference>
<dbReference type="Pfam" id="PF24859">
    <property type="entry name" value="FdhE_central"/>
    <property type="match status" value="1"/>
</dbReference>
<dbReference type="Pfam" id="PF04216">
    <property type="entry name" value="FdhE_N"/>
    <property type="match status" value="1"/>
</dbReference>
<dbReference type="PIRSF" id="PIRSF018296">
    <property type="entry name" value="Format_dh_formtn"/>
    <property type="match status" value="1"/>
</dbReference>
<dbReference type="SUPFAM" id="SSF144020">
    <property type="entry name" value="FdhE-like"/>
    <property type="match status" value="1"/>
</dbReference>
<feature type="chain" id="PRO_1000056703" description="Protein FdhE homolog">
    <location>
        <begin position="1"/>
        <end position="309"/>
    </location>
</feature>
<gene>
    <name evidence="1" type="primary">fdhE</name>
    <name type="ordered locus">ECA3002</name>
</gene>
<proteinExistence type="inferred from homology"/>
<organism>
    <name type="scientific">Pectobacterium atrosepticum (strain SCRI 1043 / ATCC BAA-672)</name>
    <name type="common">Erwinia carotovora subsp. atroseptica</name>
    <dbReference type="NCBI Taxonomy" id="218491"/>
    <lineage>
        <taxon>Bacteria</taxon>
        <taxon>Pseudomonadati</taxon>
        <taxon>Pseudomonadota</taxon>
        <taxon>Gammaproteobacteria</taxon>
        <taxon>Enterobacterales</taxon>
        <taxon>Pectobacteriaceae</taxon>
        <taxon>Pectobacterium</taxon>
    </lineage>
</organism>
<protein>
    <recommendedName>
        <fullName evidence="1">Protein FdhE homolog</fullName>
    </recommendedName>
</protein>